<dbReference type="EC" id="3.5.4.30" evidence="1"/>
<dbReference type="EMBL" id="CP000867">
    <property type="protein sequence ID" value="ABX02060.1"/>
    <property type="molecule type" value="Genomic_DNA"/>
</dbReference>
<dbReference type="SMR" id="A9A9N7"/>
<dbReference type="STRING" id="444158.MmarC6_1247"/>
<dbReference type="KEGG" id="mmx:MmarC6_1247"/>
<dbReference type="eggNOG" id="arCOG04048">
    <property type="taxonomic scope" value="Archaea"/>
</dbReference>
<dbReference type="HOGENOM" id="CLU_087476_2_1_2"/>
<dbReference type="OrthoDB" id="33242at2157"/>
<dbReference type="PhylomeDB" id="A9A9N7"/>
<dbReference type="UniPathway" id="UPA00610">
    <property type="reaction ID" value="UER00667"/>
</dbReference>
<dbReference type="GO" id="GO:0033973">
    <property type="term" value="F:dCTP deaminase (dUMP-forming) activity"/>
    <property type="evidence" value="ECO:0007669"/>
    <property type="project" value="UniProtKB-UniRule"/>
</dbReference>
<dbReference type="GO" id="GO:0008829">
    <property type="term" value="F:dCTP deaminase activity"/>
    <property type="evidence" value="ECO:0007669"/>
    <property type="project" value="InterPro"/>
</dbReference>
<dbReference type="GO" id="GO:0000166">
    <property type="term" value="F:nucleotide binding"/>
    <property type="evidence" value="ECO:0007669"/>
    <property type="project" value="UniProtKB-KW"/>
</dbReference>
<dbReference type="GO" id="GO:0006226">
    <property type="term" value="P:dUMP biosynthetic process"/>
    <property type="evidence" value="ECO:0007669"/>
    <property type="project" value="UniProtKB-UniRule"/>
</dbReference>
<dbReference type="GO" id="GO:0006229">
    <property type="term" value="P:dUTP biosynthetic process"/>
    <property type="evidence" value="ECO:0007669"/>
    <property type="project" value="InterPro"/>
</dbReference>
<dbReference type="CDD" id="cd07557">
    <property type="entry name" value="trimeric_dUTPase"/>
    <property type="match status" value="1"/>
</dbReference>
<dbReference type="Gene3D" id="2.70.40.10">
    <property type="match status" value="1"/>
</dbReference>
<dbReference type="HAMAP" id="MF_00146">
    <property type="entry name" value="dCTP_deaminase"/>
    <property type="match status" value="1"/>
</dbReference>
<dbReference type="InterPro" id="IPR011962">
    <property type="entry name" value="dCTP_deaminase"/>
</dbReference>
<dbReference type="InterPro" id="IPR036157">
    <property type="entry name" value="dUTPase-like_sf"/>
</dbReference>
<dbReference type="InterPro" id="IPR033704">
    <property type="entry name" value="dUTPase_trimeric"/>
</dbReference>
<dbReference type="NCBIfam" id="TIGR02274">
    <property type="entry name" value="dCTP_deam"/>
    <property type="match status" value="1"/>
</dbReference>
<dbReference type="PANTHER" id="PTHR42680">
    <property type="entry name" value="DCTP DEAMINASE"/>
    <property type="match status" value="1"/>
</dbReference>
<dbReference type="PANTHER" id="PTHR42680:SF3">
    <property type="entry name" value="DCTP DEAMINASE"/>
    <property type="match status" value="1"/>
</dbReference>
<dbReference type="Pfam" id="PF22769">
    <property type="entry name" value="DCD"/>
    <property type="match status" value="1"/>
</dbReference>
<dbReference type="SUPFAM" id="SSF51283">
    <property type="entry name" value="dUTPase-like"/>
    <property type="match status" value="1"/>
</dbReference>
<reference key="1">
    <citation type="submission" date="2007-10" db="EMBL/GenBank/DDBJ databases">
        <title>Complete sequence of Methanococcus maripaludis C6.</title>
        <authorList>
            <consortium name="US DOE Joint Genome Institute"/>
            <person name="Copeland A."/>
            <person name="Lucas S."/>
            <person name="Lapidus A."/>
            <person name="Barry K."/>
            <person name="Glavina del Rio T."/>
            <person name="Dalin E."/>
            <person name="Tice H."/>
            <person name="Pitluck S."/>
            <person name="Clum A."/>
            <person name="Schmutz J."/>
            <person name="Larimer F."/>
            <person name="Land M."/>
            <person name="Hauser L."/>
            <person name="Kyrpides N."/>
            <person name="Mikhailova N."/>
            <person name="Sieprawska-Lupa M."/>
            <person name="Whitman W.B."/>
            <person name="Richardson P."/>
        </authorList>
    </citation>
    <scope>NUCLEOTIDE SEQUENCE [LARGE SCALE GENOMIC DNA]</scope>
    <source>
        <strain>C6 / ATCC BAA-1332</strain>
    </source>
</reference>
<organism>
    <name type="scientific">Methanococcus maripaludis (strain C6 / ATCC BAA-1332)</name>
    <dbReference type="NCBI Taxonomy" id="444158"/>
    <lineage>
        <taxon>Archaea</taxon>
        <taxon>Methanobacteriati</taxon>
        <taxon>Methanobacteriota</taxon>
        <taxon>Methanomada group</taxon>
        <taxon>Methanococci</taxon>
        <taxon>Methanococcales</taxon>
        <taxon>Methanococcaceae</taxon>
        <taxon>Methanococcus</taxon>
    </lineage>
</organism>
<keyword id="KW-0378">Hydrolase</keyword>
<keyword id="KW-0546">Nucleotide metabolism</keyword>
<keyword id="KW-0547">Nucleotide-binding</keyword>
<comment type="function">
    <text evidence="1">Bifunctional enzyme that catalyzes both the deamination of dCTP to dUTP and the hydrolysis of dUTP to dUMP without releasing the toxic dUTP intermediate.</text>
</comment>
<comment type="catalytic activity">
    <reaction evidence="1">
        <text>dCTP + 2 H2O = dUMP + NH4(+) + diphosphate</text>
        <dbReference type="Rhea" id="RHEA:19205"/>
        <dbReference type="ChEBI" id="CHEBI:15377"/>
        <dbReference type="ChEBI" id="CHEBI:28938"/>
        <dbReference type="ChEBI" id="CHEBI:33019"/>
        <dbReference type="ChEBI" id="CHEBI:61481"/>
        <dbReference type="ChEBI" id="CHEBI:246422"/>
        <dbReference type="EC" id="3.5.4.30"/>
    </reaction>
</comment>
<comment type="pathway">
    <text evidence="1">Pyrimidine metabolism; dUMP biosynthesis; dUMP from dCTP: step 1/1.</text>
</comment>
<comment type="subunit">
    <text evidence="1">Homotrimer.</text>
</comment>
<comment type="similarity">
    <text evidence="1">Belongs to the dCTP deaminase family.</text>
</comment>
<proteinExistence type="inferred from homology"/>
<gene>
    <name evidence="1" type="primary">dcd</name>
    <name type="ordered locus">MmarC6_1247</name>
</gene>
<sequence length="206" mass="23485">MILSDKDIFDYVNSKRVLIEPFNSKFVGPCSYDVTLGSEFIKYKDDVYDLKKNLSHNKFEIENSIMVCPLNHHLDETIIENYKEKYNVDCVVSGGLLGTTNEYVELPNDVCAQYQGRSSFGRVFLQTHQTAGWIDSGFKGKITLEIVAYDKPVILYKNQRVGQLIFSKTLSPADIGYSDRKCSKYAGQKSVMASLIKKDFEIDEEE</sequence>
<protein>
    <recommendedName>
        <fullName evidence="1">dCTP deaminase, dUMP-forming</fullName>
        <ecNumber evidence="1">3.5.4.30</ecNumber>
    </recommendedName>
    <alternativeName>
        <fullName evidence="1">Bifunctional dCTP deaminase:dUTPase</fullName>
    </alternativeName>
    <alternativeName>
        <fullName evidence="1">DCD-DUT</fullName>
    </alternativeName>
</protein>
<evidence type="ECO:0000255" key="1">
    <source>
        <dbReference type="HAMAP-Rule" id="MF_00146"/>
    </source>
</evidence>
<accession>A9A9N7</accession>
<feature type="chain" id="PRO_1000096438" description="dCTP deaminase, dUMP-forming">
    <location>
        <begin position="1"/>
        <end position="206"/>
    </location>
</feature>
<feature type="active site" description="Proton donor/acceptor" evidence="1">
    <location>
        <position position="145"/>
    </location>
</feature>
<feature type="binding site" evidence="1">
    <location>
        <begin position="117"/>
        <end position="122"/>
    </location>
    <ligand>
        <name>dCTP</name>
        <dbReference type="ChEBI" id="CHEBI:61481"/>
    </ligand>
</feature>
<feature type="binding site" evidence="1">
    <location>
        <position position="135"/>
    </location>
    <ligand>
        <name>dCTP</name>
        <dbReference type="ChEBI" id="CHEBI:61481"/>
    </ligand>
</feature>
<feature type="binding site" evidence="1">
    <location>
        <begin position="143"/>
        <end position="145"/>
    </location>
    <ligand>
        <name>dCTP</name>
        <dbReference type="ChEBI" id="CHEBI:61481"/>
    </ligand>
</feature>
<feature type="binding site" evidence="1">
    <location>
        <position position="163"/>
    </location>
    <ligand>
        <name>dCTP</name>
        <dbReference type="ChEBI" id="CHEBI:61481"/>
    </ligand>
</feature>
<feature type="binding site" evidence="1">
    <location>
        <position position="177"/>
    </location>
    <ligand>
        <name>dCTP</name>
        <dbReference type="ChEBI" id="CHEBI:61481"/>
    </ligand>
</feature>
<feature type="binding site" evidence="1">
    <location>
        <position position="184"/>
    </location>
    <ligand>
        <name>dCTP</name>
        <dbReference type="ChEBI" id="CHEBI:61481"/>
    </ligand>
</feature>
<feature type="binding site" evidence="1">
    <location>
        <position position="188"/>
    </location>
    <ligand>
        <name>dCTP</name>
        <dbReference type="ChEBI" id="CHEBI:61481"/>
    </ligand>
</feature>
<feature type="site" description="Important for bifunctional activity" evidence="1">
    <location>
        <begin position="132"/>
        <end position="133"/>
    </location>
</feature>
<name>DCDB_METM6</name>